<gene>
    <name evidence="1" type="primary">psd</name>
    <name type="ordered locus">SPC_4498</name>
</gene>
<reference key="1">
    <citation type="journal article" date="2009" name="PLoS ONE">
        <title>Salmonella paratyphi C: genetic divergence from Salmonella choleraesuis and pathogenic convergence with Salmonella typhi.</title>
        <authorList>
            <person name="Liu W.-Q."/>
            <person name="Feng Y."/>
            <person name="Wang Y."/>
            <person name="Zou Q.-H."/>
            <person name="Chen F."/>
            <person name="Guo J.-T."/>
            <person name="Peng Y.-H."/>
            <person name="Jin Y."/>
            <person name="Li Y.-G."/>
            <person name="Hu S.-N."/>
            <person name="Johnston R.N."/>
            <person name="Liu G.-R."/>
            <person name="Liu S.-L."/>
        </authorList>
    </citation>
    <scope>NUCLEOTIDE SEQUENCE [LARGE SCALE GENOMIC DNA]</scope>
    <source>
        <strain>RKS4594</strain>
    </source>
</reference>
<accession>C0Q6C0</accession>
<evidence type="ECO:0000255" key="1">
    <source>
        <dbReference type="HAMAP-Rule" id="MF_00662"/>
    </source>
</evidence>
<evidence type="ECO:0000256" key="2">
    <source>
        <dbReference type="SAM" id="MobiDB-lite"/>
    </source>
</evidence>
<keyword id="KW-1003">Cell membrane</keyword>
<keyword id="KW-0210">Decarboxylase</keyword>
<keyword id="KW-0444">Lipid biosynthesis</keyword>
<keyword id="KW-0443">Lipid metabolism</keyword>
<keyword id="KW-0456">Lyase</keyword>
<keyword id="KW-0472">Membrane</keyword>
<keyword id="KW-0594">Phospholipid biosynthesis</keyword>
<keyword id="KW-1208">Phospholipid metabolism</keyword>
<keyword id="KW-0670">Pyruvate</keyword>
<keyword id="KW-0865">Zymogen</keyword>
<sequence>MLNSFKLSLQYILPKLWLTRLAGWGASKRAGWLTKLVIDLFVKYYKVDMTEAQKPDTASYRTFNDFFVRPLRDDVRPLNTDPNILVMPADGVISQLGRIEEDKILQAKGHNYSLEALLAGNYLMADKFRNGTFVTTYLSPRDYHRVHMPCNGILREMIYVPGDLFSVNHLTAQNVPNLFARNERVICLFDTEFGPMAQILVGATIVGSIETVWAGTITPPREGIIKRWTWPEGEHEGSVALLKGQEMGRFKLGSTVINLFAPGKVNLIASLASLSVTKIGQPLATSTETFVAPEVEPAPLPADEIKAEHDASPLVDNKKDDT</sequence>
<feature type="chain" id="PRO_1000147607" description="Phosphatidylserine decarboxylase beta chain" evidence="1">
    <location>
        <begin position="1"/>
        <end position="253"/>
    </location>
</feature>
<feature type="chain" id="PRO_1000147608" description="Phosphatidylserine decarboxylase alpha chain" evidence="1">
    <location>
        <begin position="254"/>
        <end position="322"/>
    </location>
</feature>
<feature type="region of interest" description="Disordered" evidence="2">
    <location>
        <begin position="294"/>
        <end position="322"/>
    </location>
</feature>
<feature type="compositionally biased region" description="Basic and acidic residues" evidence="2">
    <location>
        <begin position="303"/>
        <end position="322"/>
    </location>
</feature>
<feature type="active site" description="Charge relay system; for autoendoproteolytic cleavage activity" evidence="1">
    <location>
        <position position="90"/>
    </location>
</feature>
<feature type="active site" description="Charge relay system; for autoendoproteolytic cleavage activity" evidence="1">
    <location>
        <position position="147"/>
    </location>
</feature>
<feature type="active site" description="Charge relay system; for autoendoproteolytic cleavage activity" evidence="1">
    <location>
        <position position="254"/>
    </location>
</feature>
<feature type="active site" description="Schiff-base intermediate with substrate; via pyruvic acid; for decarboxylase activity" evidence="1">
    <location>
        <position position="254"/>
    </location>
</feature>
<feature type="site" description="Cleavage (non-hydrolytic); by autocatalysis" evidence="1">
    <location>
        <begin position="253"/>
        <end position="254"/>
    </location>
</feature>
<feature type="modified residue" description="Pyruvic acid (Ser); by autocatalysis" evidence="1">
    <location>
        <position position="254"/>
    </location>
</feature>
<protein>
    <recommendedName>
        <fullName evidence="1">Phosphatidylserine decarboxylase proenzyme</fullName>
        <ecNumber evidence="1">4.1.1.65</ecNumber>
    </recommendedName>
    <component>
        <recommendedName>
            <fullName evidence="1">Phosphatidylserine decarboxylase alpha chain</fullName>
        </recommendedName>
    </component>
    <component>
        <recommendedName>
            <fullName evidence="1">Phosphatidylserine decarboxylase beta chain</fullName>
        </recommendedName>
    </component>
</protein>
<proteinExistence type="inferred from homology"/>
<dbReference type="EC" id="4.1.1.65" evidence="1"/>
<dbReference type="EMBL" id="CP000857">
    <property type="protein sequence ID" value="ACN48550.1"/>
    <property type="molecule type" value="Genomic_DNA"/>
</dbReference>
<dbReference type="RefSeq" id="WP_000934948.1">
    <property type="nucleotide sequence ID" value="NC_012125.1"/>
</dbReference>
<dbReference type="SMR" id="C0Q6C0"/>
<dbReference type="KEGG" id="sei:SPC_4498"/>
<dbReference type="HOGENOM" id="CLU_029061_4_1_6"/>
<dbReference type="UniPathway" id="UPA00558">
    <property type="reaction ID" value="UER00616"/>
</dbReference>
<dbReference type="Proteomes" id="UP000001599">
    <property type="component" value="Chromosome"/>
</dbReference>
<dbReference type="GO" id="GO:0005886">
    <property type="term" value="C:plasma membrane"/>
    <property type="evidence" value="ECO:0007669"/>
    <property type="project" value="UniProtKB-SubCell"/>
</dbReference>
<dbReference type="GO" id="GO:0004609">
    <property type="term" value="F:phosphatidylserine decarboxylase activity"/>
    <property type="evidence" value="ECO:0007669"/>
    <property type="project" value="UniProtKB-UniRule"/>
</dbReference>
<dbReference type="GO" id="GO:0006646">
    <property type="term" value="P:phosphatidylethanolamine biosynthetic process"/>
    <property type="evidence" value="ECO:0007669"/>
    <property type="project" value="UniProtKB-UniRule"/>
</dbReference>
<dbReference type="HAMAP" id="MF_00662">
    <property type="entry name" value="PS_decarb_PSD_B_type1"/>
    <property type="match status" value="1"/>
</dbReference>
<dbReference type="InterPro" id="IPR003817">
    <property type="entry name" value="PS_Dcarbxylase"/>
</dbReference>
<dbReference type="InterPro" id="IPR033177">
    <property type="entry name" value="PSD-B"/>
</dbReference>
<dbReference type="InterPro" id="IPR033178">
    <property type="entry name" value="PSD_type1_pro"/>
</dbReference>
<dbReference type="NCBIfam" id="TIGR00163">
    <property type="entry name" value="PS_decarb"/>
    <property type="match status" value="1"/>
</dbReference>
<dbReference type="PANTHER" id="PTHR10067">
    <property type="entry name" value="PHOSPHATIDYLSERINE DECARBOXYLASE"/>
    <property type="match status" value="1"/>
</dbReference>
<dbReference type="PANTHER" id="PTHR10067:SF6">
    <property type="entry name" value="PHOSPHATIDYLSERINE DECARBOXYLASE PROENZYME, MITOCHONDRIAL"/>
    <property type="match status" value="1"/>
</dbReference>
<dbReference type="Pfam" id="PF02666">
    <property type="entry name" value="PS_Dcarbxylase"/>
    <property type="match status" value="1"/>
</dbReference>
<organism>
    <name type="scientific">Salmonella paratyphi C (strain RKS4594)</name>
    <dbReference type="NCBI Taxonomy" id="476213"/>
    <lineage>
        <taxon>Bacteria</taxon>
        <taxon>Pseudomonadati</taxon>
        <taxon>Pseudomonadota</taxon>
        <taxon>Gammaproteobacteria</taxon>
        <taxon>Enterobacterales</taxon>
        <taxon>Enterobacteriaceae</taxon>
        <taxon>Salmonella</taxon>
    </lineage>
</organism>
<name>PSD_SALPC</name>
<comment type="function">
    <text evidence="1">Catalyzes the formation of phosphatidylethanolamine (PtdEtn) from phosphatidylserine (PtdSer).</text>
</comment>
<comment type="catalytic activity">
    <reaction evidence="1">
        <text>a 1,2-diacyl-sn-glycero-3-phospho-L-serine + H(+) = a 1,2-diacyl-sn-glycero-3-phosphoethanolamine + CO2</text>
        <dbReference type="Rhea" id="RHEA:20828"/>
        <dbReference type="ChEBI" id="CHEBI:15378"/>
        <dbReference type="ChEBI" id="CHEBI:16526"/>
        <dbReference type="ChEBI" id="CHEBI:57262"/>
        <dbReference type="ChEBI" id="CHEBI:64612"/>
        <dbReference type="EC" id="4.1.1.65"/>
    </reaction>
</comment>
<comment type="cofactor">
    <cofactor evidence="1">
        <name>pyruvate</name>
        <dbReference type="ChEBI" id="CHEBI:15361"/>
    </cofactor>
    <text evidence="1">Binds 1 pyruvoyl group covalently per subunit.</text>
</comment>
<comment type="pathway">
    <text evidence="1">Phospholipid metabolism; phosphatidylethanolamine biosynthesis; phosphatidylethanolamine from CDP-diacylglycerol: step 2/2.</text>
</comment>
<comment type="subunit">
    <text evidence="1">Heterodimer of a large membrane-associated beta subunit and a small pyruvoyl-containing alpha subunit.</text>
</comment>
<comment type="subcellular location">
    <subcellularLocation>
        <location evidence="1">Cell membrane</location>
        <topology evidence="1">Peripheral membrane protein</topology>
    </subcellularLocation>
</comment>
<comment type="PTM">
    <text evidence="1">Is synthesized initially as an inactive proenzyme. Formation of the active enzyme involves a self-maturation process in which the active site pyruvoyl group is generated from an internal serine residue via an autocatalytic post-translational modification. Two non-identical subunits are generated from the proenzyme in this reaction, and the pyruvate is formed at the N-terminus of the alpha chain, which is derived from the carboxyl end of the proenzyme. The autoendoproteolytic cleavage occurs by a canonical serine protease mechanism, in which the side chain hydroxyl group of the serine supplies its oxygen atom to form the C-terminus of the beta chain, while the remainder of the serine residue undergoes an oxidative deamination to produce ammonia and the pyruvoyl prosthetic group on the alpha chain. During this reaction, the Ser that is part of the protease active site of the proenzyme becomes the pyruvoyl prosthetic group, which constitutes an essential element of the active site of the mature decarboxylase.</text>
</comment>
<comment type="similarity">
    <text evidence="1">Belongs to the phosphatidylserine decarboxylase family. PSD-B subfamily. Prokaryotic type I sub-subfamily.</text>
</comment>